<protein>
    <recommendedName>
        <fullName>Uncharacterized protein MPN_438</fullName>
    </recommendedName>
</protein>
<feature type="chain" id="PRO_0000210676" description="Uncharacterized protein MPN_438">
    <location>
        <begin position="1"/>
        <end position="345"/>
    </location>
</feature>
<feature type="region of interest" description="Disordered" evidence="1">
    <location>
        <begin position="1"/>
        <end position="58"/>
    </location>
</feature>
<feature type="region of interest" description="Disordered" evidence="1">
    <location>
        <begin position="139"/>
        <end position="165"/>
    </location>
</feature>
<feature type="compositionally biased region" description="Basic and acidic residues" evidence="1">
    <location>
        <begin position="27"/>
        <end position="39"/>
    </location>
</feature>
<feature type="compositionally biased region" description="Polar residues" evidence="1">
    <location>
        <begin position="154"/>
        <end position="165"/>
    </location>
</feature>
<reference key="1">
    <citation type="journal article" date="1996" name="Nucleic Acids Res.">
        <title>Complete sequence analysis of the genome of the bacterium Mycoplasma pneumoniae.</title>
        <authorList>
            <person name="Himmelreich R."/>
            <person name="Hilbert H."/>
            <person name="Plagens H."/>
            <person name="Pirkl E."/>
            <person name="Li B.-C."/>
            <person name="Herrmann R."/>
        </authorList>
    </citation>
    <scope>NUCLEOTIDE SEQUENCE [LARGE SCALE GENOMIC DNA]</scope>
    <source>
        <strain>ATCC 29342 / M129 / Subtype 1</strain>
    </source>
</reference>
<accession>P75340</accession>
<dbReference type="EMBL" id="U00089">
    <property type="protein sequence ID" value="AAB96051.1"/>
    <property type="molecule type" value="Genomic_DNA"/>
</dbReference>
<dbReference type="PIR" id="S73729">
    <property type="entry name" value="S73729"/>
</dbReference>
<dbReference type="SMR" id="P75340"/>
<dbReference type="IntAct" id="P75340">
    <property type="interactions" value="1"/>
</dbReference>
<dbReference type="STRING" id="272634.MPN_438"/>
<dbReference type="EnsemblBacteria" id="AAB96051">
    <property type="protein sequence ID" value="AAB96051"/>
    <property type="gene ID" value="MPN_438"/>
</dbReference>
<dbReference type="KEGG" id="mpn:MPN_438"/>
<dbReference type="HOGENOM" id="CLU_803687_0_0_14"/>
<dbReference type="Proteomes" id="UP000000808">
    <property type="component" value="Chromosome"/>
</dbReference>
<dbReference type="InterPro" id="IPR022186">
    <property type="entry name" value="DUF3713"/>
</dbReference>
<dbReference type="Pfam" id="PF12506">
    <property type="entry name" value="DUF3713"/>
    <property type="match status" value="1"/>
</dbReference>
<keyword id="KW-1185">Reference proteome</keyword>
<name>Y438_MYCPN</name>
<gene>
    <name type="ordered locus">MPN_438</name>
    <name type="ORF">H08_orf345</name>
    <name type="ORF">MP403</name>
</gene>
<evidence type="ECO:0000256" key="1">
    <source>
        <dbReference type="SAM" id="MobiDB-lite"/>
    </source>
</evidence>
<evidence type="ECO:0000305" key="2"/>
<comment type="similarity">
    <text evidence="2">Belongs to the MG307/MG309/MG338 family.</text>
</comment>
<organism>
    <name type="scientific">Mycoplasma pneumoniae (strain ATCC 29342 / M129 / Subtype 1)</name>
    <name type="common">Mycoplasmoides pneumoniae</name>
    <dbReference type="NCBI Taxonomy" id="272634"/>
    <lineage>
        <taxon>Bacteria</taxon>
        <taxon>Bacillati</taxon>
        <taxon>Mycoplasmatota</taxon>
        <taxon>Mycoplasmoidales</taxon>
        <taxon>Mycoplasmoidaceae</taxon>
        <taxon>Mycoplasmoides</taxon>
    </lineage>
</organism>
<sequence length="345" mass="37472">MPSPFFAEEKDIPENQNVGNKRWKKLIKGEGSDDGKEKSSDDDDSSSSTKGLFGWRGDTSSGNLFDFPNTLTDVGETKQIVDATTIVDQLEAADLGAALNLKLSFLKQDFDELPVIKKLPDNLNDTIVAKSDNLEKTSKTNSTFYKDNGDSSEKQGSAESKNSPKTQLKEIFNGQNGDSGNLGKLAEQLQKTDSTKMEARSQTWQLRNAVSLKTTNMAQSDENYLLLDAAIPAFETSSQSPQSSGTISGSGALVNLTSTSVNLTQQKSSTTPLNQRIVRNSTGVKLLALEGLLYYVVGSSNKQQSSSSTIATSLAQNQSNNNQEQEINSSLQKNLLKFRAFQAKN</sequence>
<proteinExistence type="inferred from homology"/>